<gene>
    <name evidence="1" type="primary">rpsT</name>
    <name type="ordered locus">Adeh_2725</name>
</gene>
<name>RS20_ANADE</name>
<evidence type="ECO:0000255" key="1">
    <source>
        <dbReference type="HAMAP-Rule" id="MF_00500"/>
    </source>
</evidence>
<evidence type="ECO:0000256" key="2">
    <source>
        <dbReference type="SAM" id="MobiDB-lite"/>
    </source>
</evidence>
<evidence type="ECO:0000305" key="3"/>
<protein>
    <recommendedName>
        <fullName evidence="1">Small ribosomal subunit protein bS20</fullName>
    </recommendedName>
    <alternativeName>
        <fullName evidence="3">30S ribosomal protein S20</fullName>
    </alternativeName>
</protein>
<feature type="chain" id="PRO_0000236421" description="Small ribosomal subunit protein bS20">
    <location>
        <begin position="1"/>
        <end position="92"/>
    </location>
</feature>
<feature type="region of interest" description="Disordered" evidence="2">
    <location>
        <begin position="1"/>
        <end position="28"/>
    </location>
</feature>
<reference key="1">
    <citation type="submission" date="2006-01" db="EMBL/GenBank/DDBJ databases">
        <title>Complete sequence of Anaeromyxobacter dehalogenans 2CP-C.</title>
        <authorList>
            <person name="Copeland A."/>
            <person name="Lucas S."/>
            <person name="Lapidus A."/>
            <person name="Barry K."/>
            <person name="Detter J.C."/>
            <person name="Glavina T."/>
            <person name="Hammon N."/>
            <person name="Israni S."/>
            <person name="Pitluck S."/>
            <person name="Brettin T."/>
            <person name="Bruce D."/>
            <person name="Han C."/>
            <person name="Tapia R."/>
            <person name="Gilna P."/>
            <person name="Kiss H."/>
            <person name="Schmutz J."/>
            <person name="Larimer F."/>
            <person name="Land M."/>
            <person name="Kyrpides N."/>
            <person name="Anderson I."/>
            <person name="Sanford R.A."/>
            <person name="Ritalahti K.M."/>
            <person name="Thomas H.S."/>
            <person name="Kirby J.R."/>
            <person name="Zhulin I.B."/>
            <person name="Loeffler F.E."/>
            <person name="Richardson P."/>
        </authorList>
    </citation>
    <scope>NUCLEOTIDE SEQUENCE [LARGE SCALE GENOMIC DNA]</scope>
    <source>
        <strain>2CP-C</strain>
    </source>
</reference>
<proteinExistence type="inferred from homology"/>
<sequence length="92" mass="9629">MANTASAEKRNRQAQKRRARNVQVRTGVKSAVKKLREAIAKGDPATTQAALKSAEKTIGKAASKGVLHRNAASRKISRLAKAAAKPAAAAAK</sequence>
<organism>
    <name type="scientific">Anaeromyxobacter dehalogenans (strain 2CP-C)</name>
    <dbReference type="NCBI Taxonomy" id="290397"/>
    <lineage>
        <taxon>Bacteria</taxon>
        <taxon>Pseudomonadati</taxon>
        <taxon>Myxococcota</taxon>
        <taxon>Myxococcia</taxon>
        <taxon>Myxococcales</taxon>
        <taxon>Cystobacterineae</taxon>
        <taxon>Anaeromyxobacteraceae</taxon>
        <taxon>Anaeromyxobacter</taxon>
    </lineage>
</organism>
<dbReference type="EMBL" id="CP000251">
    <property type="protein sequence ID" value="ABC82495.1"/>
    <property type="molecule type" value="Genomic_DNA"/>
</dbReference>
<dbReference type="RefSeq" id="WP_011421777.1">
    <property type="nucleotide sequence ID" value="NC_007760.1"/>
</dbReference>
<dbReference type="SMR" id="Q2ILG4"/>
<dbReference type="STRING" id="290397.Adeh_2725"/>
<dbReference type="KEGG" id="ade:Adeh_2725"/>
<dbReference type="eggNOG" id="COG0268">
    <property type="taxonomic scope" value="Bacteria"/>
</dbReference>
<dbReference type="HOGENOM" id="CLU_160655_3_1_7"/>
<dbReference type="OrthoDB" id="9807974at2"/>
<dbReference type="Proteomes" id="UP000001935">
    <property type="component" value="Chromosome"/>
</dbReference>
<dbReference type="GO" id="GO:0005829">
    <property type="term" value="C:cytosol"/>
    <property type="evidence" value="ECO:0007669"/>
    <property type="project" value="TreeGrafter"/>
</dbReference>
<dbReference type="GO" id="GO:0015935">
    <property type="term" value="C:small ribosomal subunit"/>
    <property type="evidence" value="ECO:0007669"/>
    <property type="project" value="TreeGrafter"/>
</dbReference>
<dbReference type="GO" id="GO:0070181">
    <property type="term" value="F:small ribosomal subunit rRNA binding"/>
    <property type="evidence" value="ECO:0007669"/>
    <property type="project" value="TreeGrafter"/>
</dbReference>
<dbReference type="GO" id="GO:0003735">
    <property type="term" value="F:structural constituent of ribosome"/>
    <property type="evidence" value="ECO:0007669"/>
    <property type="project" value="InterPro"/>
</dbReference>
<dbReference type="GO" id="GO:0006412">
    <property type="term" value="P:translation"/>
    <property type="evidence" value="ECO:0007669"/>
    <property type="project" value="UniProtKB-UniRule"/>
</dbReference>
<dbReference type="FunFam" id="1.20.58.110:FF:000001">
    <property type="entry name" value="30S ribosomal protein S20"/>
    <property type="match status" value="1"/>
</dbReference>
<dbReference type="Gene3D" id="1.20.58.110">
    <property type="entry name" value="Ribosomal protein S20"/>
    <property type="match status" value="1"/>
</dbReference>
<dbReference type="HAMAP" id="MF_00500">
    <property type="entry name" value="Ribosomal_bS20"/>
    <property type="match status" value="1"/>
</dbReference>
<dbReference type="InterPro" id="IPR002583">
    <property type="entry name" value="Ribosomal_bS20"/>
</dbReference>
<dbReference type="InterPro" id="IPR036510">
    <property type="entry name" value="Ribosomal_bS20_sf"/>
</dbReference>
<dbReference type="NCBIfam" id="TIGR00029">
    <property type="entry name" value="S20"/>
    <property type="match status" value="1"/>
</dbReference>
<dbReference type="PANTHER" id="PTHR33398">
    <property type="entry name" value="30S RIBOSOMAL PROTEIN S20"/>
    <property type="match status" value="1"/>
</dbReference>
<dbReference type="PANTHER" id="PTHR33398:SF1">
    <property type="entry name" value="SMALL RIBOSOMAL SUBUNIT PROTEIN BS20C"/>
    <property type="match status" value="1"/>
</dbReference>
<dbReference type="Pfam" id="PF01649">
    <property type="entry name" value="Ribosomal_S20p"/>
    <property type="match status" value="1"/>
</dbReference>
<dbReference type="SUPFAM" id="SSF46992">
    <property type="entry name" value="Ribosomal protein S20"/>
    <property type="match status" value="1"/>
</dbReference>
<accession>Q2ILG4</accession>
<keyword id="KW-1185">Reference proteome</keyword>
<keyword id="KW-0687">Ribonucleoprotein</keyword>
<keyword id="KW-0689">Ribosomal protein</keyword>
<keyword id="KW-0694">RNA-binding</keyword>
<keyword id="KW-0699">rRNA-binding</keyword>
<comment type="function">
    <text evidence="1">Binds directly to 16S ribosomal RNA.</text>
</comment>
<comment type="similarity">
    <text evidence="1">Belongs to the bacterial ribosomal protein bS20 family.</text>
</comment>